<protein>
    <recommendedName>
        <fullName>Nuclear cap-binding protein subunit 2</fullName>
    </recommendedName>
    <alternativeName>
        <fullName>20 kDa nuclear cap-binding protein</fullName>
    </alternativeName>
    <alternativeName>
        <fullName>NCBP 20 kDa subunit</fullName>
        <shortName>CBP20</shortName>
    </alternativeName>
</protein>
<keyword id="KW-0507">mRNA processing</keyword>
<keyword id="KW-0508">mRNA splicing</keyword>
<keyword id="KW-0539">Nucleus</keyword>
<keyword id="KW-1185">Reference proteome</keyword>
<keyword id="KW-0694">RNA-binding</keyword>
<keyword id="KW-0943">RNA-mediated gene silencing</keyword>
<accession>B4IBA4</accession>
<gene>
    <name type="primary">Cbp20</name>
    <name type="ORF">GM15280</name>
</gene>
<reference key="1">
    <citation type="journal article" date="2007" name="Nature">
        <title>Evolution of genes and genomes on the Drosophila phylogeny.</title>
        <authorList>
            <consortium name="Drosophila 12 genomes consortium"/>
        </authorList>
    </citation>
    <scope>NUCLEOTIDE SEQUENCE [LARGE SCALE GENOMIC DNA]</scope>
    <source>
        <strain>Rob3c / Tucson 14021-0248.25</strain>
    </source>
</reference>
<comment type="function">
    <text evidence="1">Component of the cap-binding complex (CBC), which binds co-transcriptionally to the 5' cap of pre-mRNAs and is involved in various processes such as pre-mRNA splicing and RNA-mediated gene silencing (RNAi). The CBC complex is involved in miRNA-mediated RNA interference via its interaction with Ars2 and is required for primary microRNAs (miRNAs) processing. Also involved in innate immunity via the short interfering RNAs (siRNAs) processing machinery by restricting the viral RNA production. In the CBC complex, Cbp20 recognizes and binds capped RNAs (m7GpppG-capped RNA) but requires Cbp80 to stabilize the movement of its N-terminal loop and lock the CBC into a high affinity cap-binding state with the cap structure (By similarity).</text>
</comment>
<comment type="subunit">
    <text evidence="1">Component of the nuclear cap-binding complex (CBC), a heterodimer composed of Cbp80 and Cbp20 that interacts with m7GpppG-capped RNA. Interacts with Ars2 (By similarity).</text>
</comment>
<comment type="subcellular location">
    <subcellularLocation>
        <location evidence="1">Nucleus</location>
    </subcellularLocation>
</comment>
<comment type="similarity">
    <text evidence="3">Belongs to the RRM NCBP2 family.</text>
</comment>
<dbReference type="EMBL" id="CH480827">
    <property type="protein sequence ID" value="EDW44662.1"/>
    <property type="molecule type" value="Genomic_DNA"/>
</dbReference>
<dbReference type="SMR" id="B4IBA4"/>
<dbReference type="STRING" id="7238.B4IBA4"/>
<dbReference type="EnsemblMetazoa" id="FBtr0198265">
    <property type="protein sequence ID" value="FBpp0196757"/>
    <property type="gene ID" value="FBgn0170200"/>
</dbReference>
<dbReference type="EnsemblMetazoa" id="XM_002040978.2">
    <property type="protein sequence ID" value="XP_002041014.1"/>
    <property type="gene ID" value="LOC6616657"/>
</dbReference>
<dbReference type="GeneID" id="6616657"/>
<dbReference type="KEGG" id="dse:6616657"/>
<dbReference type="CTD" id="42166"/>
<dbReference type="HOGENOM" id="CLU_070952_2_0_1"/>
<dbReference type="OMA" id="DIRRIIM"/>
<dbReference type="OrthoDB" id="15326at7215"/>
<dbReference type="PhylomeDB" id="B4IBA4"/>
<dbReference type="Proteomes" id="UP000001292">
    <property type="component" value="Unassembled WGS sequence"/>
</dbReference>
<dbReference type="GO" id="GO:0005846">
    <property type="term" value="C:nuclear cap binding complex"/>
    <property type="evidence" value="ECO:0007669"/>
    <property type="project" value="InterPro"/>
</dbReference>
<dbReference type="GO" id="GO:0005634">
    <property type="term" value="C:nucleus"/>
    <property type="evidence" value="ECO:0007669"/>
    <property type="project" value="UniProtKB-SubCell"/>
</dbReference>
<dbReference type="GO" id="GO:0099523">
    <property type="term" value="C:presynaptic cytosol"/>
    <property type="evidence" value="ECO:0007669"/>
    <property type="project" value="EnsemblMetazoa"/>
</dbReference>
<dbReference type="GO" id="GO:0000339">
    <property type="term" value="F:RNA cap binding"/>
    <property type="evidence" value="ECO:0007669"/>
    <property type="project" value="InterPro"/>
</dbReference>
<dbReference type="GO" id="GO:0045292">
    <property type="term" value="P:mRNA cis splicing, via spliceosome"/>
    <property type="evidence" value="ECO:0007669"/>
    <property type="project" value="InterPro"/>
</dbReference>
<dbReference type="GO" id="GO:0045071">
    <property type="term" value="P:negative regulation of viral genome replication"/>
    <property type="evidence" value="ECO:0007669"/>
    <property type="project" value="EnsemblMetazoa"/>
</dbReference>
<dbReference type="GO" id="GO:0031053">
    <property type="term" value="P:primary miRNA processing"/>
    <property type="evidence" value="ECO:0007669"/>
    <property type="project" value="EnsemblMetazoa"/>
</dbReference>
<dbReference type="GO" id="GO:0035194">
    <property type="term" value="P:regulatory ncRNA-mediated post-transcriptional gene silencing"/>
    <property type="evidence" value="ECO:0007669"/>
    <property type="project" value="EnsemblMetazoa"/>
</dbReference>
<dbReference type="GO" id="GO:0030422">
    <property type="term" value="P:siRNA processing"/>
    <property type="evidence" value="ECO:0007669"/>
    <property type="project" value="EnsemblMetazoa"/>
</dbReference>
<dbReference type="CDD" id="cd12240">
    <property type="entry name" value="RRM_NCBP2"/>
    <property type="match status" value="1"/>
</dbReference>
<dbReference type="FunFam" id="3.30.70.330:FF:000128">
    <property type="entry name" value="Nuclear cap-binding protein subunit 2"/>
    <property type="match status" value="1"/>
</dbReference>
<dbReference type="Gene3D" id="3.30.70.330">
    <property type="match status" value="1"/>
</dbReference>
<dbReference type="InterPro" id="IPR027157">
    <property type="entry name" value="NCBP2"/>
</dbReference>
<dbReference type="InterPro" id="IPR034148">
    <property type="entry name" value="NCBP2_RRM"/>
</dbReference>
<dbReference type="InterPro" id="IPR012677">
    <property type="entry name" value="Nucleotide-bd_a/b_plait_sf"/>
</dbReference>
<dbReference type="InterPro" id="IPR035979">
    <property type="entry name" value="RBD_domain_sf"/>
</dbReference>
<dbReference type="InterPro" id="IPR000504">
    <property type="entry name" value="RRM_dom"/>
</dbReference>
<dbReference type="PANTHER" id="PTHR18847">
    <property type="entry name" value="20 KD NUCLEAR CAP BINDING PROTEIN"/>
    <property type="match status" value="1"/>
</dbReference>
<dbReference type="PANTHER" id="PTHR18847:SF0">
    <property type="entry name" value="NUCLEAR CAP-BINDING PROTEIN SUBUNIT 2"/>
    <property type="match status" value="1"/>
</dbReference>
<dbReference type="Pfam" id="PF00076">
    <property type="entry name" value="RRM_1"/>
    <property type="match status" value="1"/>
</dbReference>
<dbReference type="SMART" id="SM00360">
    <property type="entry name" value="RRM"/>
    <property type="match status" value="1"/>
</dbReference>
<dbReference type="SUPFAM" id="SSF54928">
    <property type="entry name" value="RNA-binding domain, RBD"/>
    <property type="match status" value="1"/>
</dbReference>
<dbReference type="PROSITE" id="PS50102">
    <property type="entry name" value="RRM"/>
    <property type="match status" value="1"/>
</dbReference>
<feature type="chain" id="PRO_0000385270" description="Nuclear cap-binding protein subunit 2">
    <location>
        <begin position="1"/>
        <end position="154"/>
    </location>
</feature>
<feature type="domain" description="RRM" evidence="2">
    <location>
        <begin position="30"/>
        <end position="108"/>
    </location>
</feature>
<feature type="binding site" evidence="1">
    <location>
        <position position="10"/>
    </location>
    <ligand>
        <name>mRNA</name>
        <dbReference type="ChEBI" id="CHEBI:33699"/>
    </ligand>
    <ligandPart>
        <name>mRNA cap</name>
    </ligandPart>
</feature>
<feature type="binding site" evidence="1">
    <location>
        <position position="33"/>
    </location>
    <ligand>
        <name>mRNA</name>
        <dbReference type="ChEBI" id="CHEBI:33699"/>
    </ligand>
    <ligandPart>
        <name>mRNA cap</name>
    </ligandPart>
</feature>
<feature type="binding site" evidence="1">
    <location>
        <begin position="102"/>
        <end position="106"/>
    </location>
    <ligand>
        <name>mRNA</name>
        <dbReference type="ChEBI" id="CHEBI:33699"/>
    </ligand>
    <ligandPart>
        <name>mRNA cap</name>
    </ligandPart>
</feature>
<feature type="binding site" evidence="1">
    <location>
        <begin position="113"/>
        <end position="117"/>
    </location>
    <ligand>
        <name>mRNA</name>
        <dbReference type="ChEBI" id="CHEBI:33699"/>
    </ligand>
    <ligandPart>
        <name>mRNA cap</name>
    </ligandPart>
</feature>
<feature type="binding site" evidence="1">
    <location>
        <begin position="123"/>
        <end position="124"/>
    </location>
    <ligand>
        <name>mRNA</name>
        <dbReference type="ChEBI" id="CHEBI:33699"/>
    </ligand>
    <ligandPart>
        <name>mRNA cap</name>
    </ligandPart>
</feature>
<proteinExistence type="inferred from homology"/>
<name>NCBP2_DROSE</name>
<evidence type="ECO:0000250" key="1"/>
<evidence type="ECO:0000255" key="2">
    <source>
        <dbReference type="PROSITE-ProRule" id="PRU00176"/>
    </source>
</evidence>
<evidence type="ECO:0000305" key="3"/>
<sequence length="154" mass="17719">MFASVELSSYRDQHFKGSRSEQERSLRDSCTLYVGNLSFYTTEEQIHELFSRCGDVRVIVMGLDKYKKTPCGFCFVEYYVRSEAEAAMRFVNGTRLDDRLIRVDWDAGFVEGRQYGRGKTGGQVRDEYRTDYDAGRGGYGKLLSQKIAPNTDNR</sequence>
<organism>
    <name type="scientific">Drosophila sechellia</name>
    <name type="common">Fruit fly</name>
    <dbReference type="NCBI Taxonomy" id="7238"/>
    <lineage>
        <taxon>Eukaryota</taxon>
        <taxon>Metazoa</taxon>
        <taxon>Ecdysozoa</taxon>
        <taxon>Arthropoda</taxon>
        <taxon>Hexapoda</taxon>
        <taxon>Insecta</taxon>
        <taxon>Pterygota</taxon>
        <taxon>Neoptera</taxon>
        <taxon>Endopterygota</taxon>
        <taxon>Diptera</taxon>
        <taxon>Brachycera</taxon>
        <taxon>Muscomorpha</taxon>
        <taxon>Ephydroidea</taxon>
        <taxon>Drosophilidae</taxon>
        <taxon>Drosophila</taxon>
        <taxon>Sophophora</taxon>
    </lineage>
</organism>